<protein>
    <recommendedName>
        <fullName evidence="2">Small ribosomal subunit protein uS7c</fullName>
    </recommendedName>
    <alternativeName>
        <fullName>30S ribosomal protein S7, chloroplastic</fullName>
    </alternativeName>
</protein>
<comment type="function">
    <text evidence="1">One of the primary rRNA binding proteins, it binds directly to 16S rRNA where it nucleates assembly of the head domain of the 30S subunit.</text>
</comment>
<comment type="subunit">
    <text>Part of the 30S ribosomal subunit.</text>
</comment>
<comment type="subcellular location">
    <subcellularLocation>
        <location>Plastid</location>
        <location>Chloroplast</location>
    </subcellularLocation>
</comment>
<comment type="similarity">
    <text evidence="2">Belongs to the universal ribosomal protein uS7 family.</text>
</comment>
<gene>
    <name type="primary">rps7</name>
</gene>
<name>RR7_CYACA</name>
<dbReference type="EMBL" id="AF022186">
    <property type="protein sequence ID" value="AAF12933.1"/>
    <property type="molecule type" value="Genomic_DNA"/>
</dbReference>
<dbReference type="RefSeq" id="NP_045161.1">
    <property type="nucleotide sequence ID" value="NC_001840.1"/>
</dbReference>
<dbReference type="SMR" id="Q9TLV7"/>
<dbReference type="GeneID" id="800250"/>
<dbReference type="GO" id="GO:0009507">
    <property type="term" value="C:chloroplast"/>
    <property type="evidence" value="ECO:0007669"/>
    <property type="project" value="UniProtKB-SubCell"/>
</dbReference>
<dbReference type="GO" id="GO:0015935">
    <property type="term" value="C:small ribosomal subunit"/>
    <property type="evidence" value="ECO:0007669"/>
    <property type="project" value="InterPro"/>
</dbReference>
<dbReference type="GO" id="GO:0019843">
    <property type="term" value="F:rRNA binding"/>
    <property type="evidence" value="ECO:0007669"/>
    <property type="project" value="UniProtKB-UniRule"/>
</dbReference>
<dbReference type="GO" id="GO:0003735">
    <property type="term" value="F:structural constituent of ribosome"/>
    <property type="evidence" value="ECO:0007669"/>
    <property type="project" value="InterPro"/>
</dbReference>
<dbReference type="GO" id="GO:0006412">
    <property type="term" value="P:translation"/>
    <property type="evidence" value="ECO:0007669"/>
    <property type="project" value="UniProtKB-UniRule"/>
</dbReference>
<dbReference type="CDD" id="cd14871">
    <property type="entry name" value="uS7_Chloroplast"/>
    <property type="match status" value="1"/>
</dbReference>
<dbReference type="FunFam" id="1.10.455.10:FF:000001">
    <property type="entry name" value="30S ribosomal protein S7"/>
    <property type="match status" value="1"/>
</dbReference>
<dbReference type="Gene3D" id="1.10.455.10">
    <property type="entry name" value="Ribosomal protein S7 domain"/>
    <property type="match status" value="1"/>
</dbReference>
<dbReference type="HAMAP" id="MF_00480_B">
    <property type="entry name" value="Ribosomal_uS7_B"/>
    <property type="match status" value="1"/>
</dbReference>
<dbReference type="InterPro" id="IPR000235">
    <property type="entry name" value="Ribosomal_uS7"/>
</dbReference>
<dbReference type="InterPro" id="IPR005717">
    <property type="entry name" value="Ribosomal_uS7_bac/org-type"/>
</dbReference>
<dbReference type="InterPro" id="IPR020606">
    <property type="entry name" value="Ribosomal_uS7_CS"/>
</dbReference>
<dbReference type="InterPro" id="IPR023798">
    <property type="entry name" value="Ribosomal_uS7_dom"/>
</dbReference>
<dbReference type="InterPro" id="IPR036823">
    <property type="entry name" value="Ribosomal_uS7_dom_sf"/>
</dbReference>
<dbReference type="NCBIfam" id="TIGR01029">
    <property type="entry name" value="rpsG_bact"/>
    <property type="match status" value="1"/>
</dbReference>
<dbReference type="PANTHER" id="PTHR11205">
    <property type="entry name" value="RIBOSOMAL PROTEIN S7"/>
    <property type="match status" value="1"/>
</dbReference>
<dbReference type="Pfam" id="PF00177">
    <property type="entry name" value="Ribosomal_S7"/>
    <property type="match status" value="1"/>
</dbReference>
<dbReference type="PIRSF" id="PIRSF002122">
    <property type="entry name" value="RPS7p_RPS7a_RPS5e_RPS7o"/>
    <property type="match status" value="1"/>
</dbReference>
<dbReference type="SUPFAM" id="SSF47973">
    <property type="entry name" value="Ribosomal protein S7"/>
    <property type="match status" value="1"/>
</dbReference>
<dbReference type="PROSITE" id="PS00052">
    <property type="entry name" value="RIBOSOMAL_S7"/>
    <property type="match status" value="1"/>
</dbReference>
<reference key="1">
    <citation type="journal article" date="2000" name="J. Mol. Evol.">
        <title>The structure and gene repertoire of an ancient red algal plastid genome.</title>
        <authorList>
            <person name="Gloeckner G."/>
            <person name="Rosenthal A."/>
            <person name="Valentin K.-U."/>
        </authorList>
    </citation>
    <scope>NUCLEOTIDE SEQUENCE [LARGE SCALE GENOMIC DNA]</scope>
    <source>
        <strain>RK-1</strain>
    </source>
</reference>
<organism>
    <name type="scientific">Cyanidium caldarium</name>
    <name type="common">Red alga</name>
    <dbReference type="NCBI Taxonomy" id="2771"/>
    <lineage>
        <taxon>Eukaryota</taxon>
        <taxon>Rhodophyta</taxon>
        <taxon>Bangiophyceae</taxon>
        <taxon>Cyanidiales</taxon>
        <taxon>Cyanidiaceae</taxon>
        <taxon>Cyanidium</taxon>
    </lineage>
</organism>
<feature type="chain" id="PRO_0000124449" description="Small ribosomal subunit protein uS7c">
    <location>
        <begin position="1"/>
        <end position="156"/>
    </location>
</feature>
<geneLocation type="chloroplast"/>
<sequence>MSQKDPYKTYRLVSDPFYESPLVTLLIMHVLRNGKKSISQRIVYSAIENIAMKVKEDPLEIIERAIKNVIPAVEIRSRRIGGSTYQVPTEVRVHRGISLSIRWVIKFAKIRPGKSMSLKLANELLDASKNLGNSIRKKEDTHKMAEANRAFAHYRY</sequence>
<accession>Q9TLV7</accession>
<evidence type="ECO:0000250" key="1"/>
<evidence type="ECO:0000305" key="2"/>
<keyword id="KW-0150">Chloroplast</keyword>
<keyword id="KW-0934">Plastid</keyword>
<keyword id="KW-0687">Ribonucleoprotein</keyword>
<keyword id="KW-0689">Ribosomal protein</keyword>
<keyword id="KW-0694">RNA-binding</keyword>
<keyword id="KW-0699">rRNA-binding</keyword>
<proteinExistence type="inferred from homology"/>